<keyword id="KW-0646">Protease inhibitor</keyword>
<keyword id="KW-0722">Serine protease inhibitor</keyword>
<sequence>MSSMEGSVLKYPEPTEGSIGASSAKTSWPEVVGMSAEKAKEIILRDKPNAQVEVIPVDAMVHLNFDPNRVFVLVAVARTPTVG</sequence>
<comment type="function">
    <text>Inhibits both subtilisin and chymotrypsin.</text>
</comment>
<comment type="similarity">
    <text evidence="3">Belongs to the protease inhibitor I13 (potato type I serine protease inhibitor) family.</text>
</comment>
<accession>P16062</accession>
<reference key="1">
    <citation type="journal article" date="1988" name="Plant Mol. Biol.">
        <title>Molecular cloning of two isoinhibitor forms of chymotrypsin inhibitor 1 (CI-1) from barley endosperm and their expression in normal and mutant barleys.</title>
        <authorList>
            <person name="Williamson M.S."/>
            <person name="Forde J."/>
            <person name="Kreis M."/>
        </authorList>
        <dbReference type="AGRICOLA" id="IND92000036"/>
    </citation>
    <scope>NUCLEOTIDE SEQUENCE [MRNA]</scope>
</reference>
<reference key="2">
    <citation type="journal article" date="1994" name="Biochim. Biophys. Acta">
        <title>Expression and kinetic characterization of barley chymotrypsin inhibitors 1a and 1b.</title>
        <authorList>
            <person name="Greagg M.A."/>
            <person name="Brauer A.B."/>
            <person name="Leatherbarrow R.J."/>
        </authorList>
    </citation>
    <scope>CHARACTERIZATION</scope>
</reference>
<evidence type="ECO:0000250" key="1"/>
<evidence type="ECO:0000256" key="2">
    <source>
        <dbReference type="SAM" id="MobiDB-lite"/>
    </source>
</evidence>
<evidence type="ECO:0000305" key="3"/>
<feature type="chain" id="PRO_0000217647" description="Subtilisin-chymotrypsin inhibitor CI-1A">
    <location>
        <begin position="1"/>
        <end position="83"/>
    </location>
</feature>
<feature type="region of interest" description="Disordered" evidence="2">
    <location>
        <begin position="1"/>
        <end position="24"/>
    </location>
</feature>
<feature type="site" description="Reactive bond for subtilisin" evidence="1">
    <location>
        <begin position="34"/>
        <end position="35"/>
    </location>
</feature>
<feature type="site" description="Reactive bond for chymotrypsin and subtilisin">
    <location>
        <begin position="63"/>
        <end position="64"/>
    </location>
</feature>
<organism>
    <name type="scientific">Hordeum vulgare</name>
    <name type="common">Barley</name>
    <dbReference type="NCBI Taxonomy" id="4513"/>
    <lineage>
        <taxon>Eukaryota</taxon>
        <taxon>Viridiplantae</taxon>
        <taxon>Streptophyta</taxon>
        <taxon>Embryophyta</taxon>
        <taxon>Tracheophyta</taxon>
        <taxon>Spermatophyta</taxon>
        <taxon>Magnoliopsida</taxon>
        <taxon>Liliopsida</taxon>
        <taxon>Poales</taxon>
        <taxon>Poaceae</taxon>
        <taxon>BOP clade</taxon>
        <taxon>Pooideae</taxon>
        <taxon>Triticodae</taxon>
        <taxon>Triticeae</taxon>
        <taxon>Hordeinae</taxon>
        <taxon>Hordeum</taxon>
    </lineage>
</organism>
<dbReference type="EMBL" id="M21400">
    <property type="protein sequence ID" value="AAA32945.1"/>
    <property type="molecule type" value="mRNA"/>
</dbReference>
<dbReference type="PIR" id="JA0181">
    <property type="entry name" value="JA0181"/>
</dbReference>
<dbReference type="SMR" id="P16062"/>
<dbReference type="MEROPS" id="I13.005"/>
<dbReference type="OMA" id="MKYPEPA"/>
<dbReference type="ExpressionAtlas" id="P16062">
    <property type="expression patterns" value="baseline and differential"/>
</dbReference>
<dbReference type="GO" id="GO:0004867">
    <property type="term" value="F:serine-type endopeptidase inhibitor activity"/>
    <property type="evidence" value="ECO:0007669"/>
    <property type="project" value="UniProtKB-KW"/>
</dbReference>
<dbReference type="GO" id="GO:0009611">
    <property type="term" value="P:response to wounding"/>
    <property type="evidence" value="ECO:0007669"/>
    <property type="project" value="InterPro"/>
</dbReference>
<dbReference type="Gene3D" id="3.30.10.10">
    <property type="entry name" value="Trypsin Inhibitor V, subunit A"/>
    <property type="match status" value="1"/>
</dbReference>
<dbReference type="InterPro" id="IPR000864">
    <property type="entry name" value="Prot_inh_pot1"/>
</dbReference>
<dbReference type="InterPro" id="IPR036354">
    <property type="entry name" value="Prot_inh_pot1_sf"/>
</dbReference>
<dbReference type="PANTHER" id="PTHR33091">
    <property type="entry name" value="PROTEIN, PUTATIVE, EXPRESSED-RELATED"/>
    <property type="match status" value="1"/>
</dbReference>
<dbReference type="PANTHER" id="PTHR33091:SF46">
    <property type="entry name" value="SUBTILISIN-CHYMOTRYPSIN INHIBITOR-2A"/>
    <property type="match status" value="1"/>
</dbReference>
<dbReference type="Pfam" id="PF00280">
    <property type="entry name" value="potato_inhibit"/>
    <property type="match status" value="1"/>
</dbReference>
<dbReference type="PRINTS" id="PR00292">
    <property type="entry name" value="POTATOINHBTR"/>
</dbReference>
<dbReference type="SUPFAM" id="SSF54654">
    <property type="entry name" value="CI-2 family of serine protease inhibitors"/>
    <property type="match status" value="1"/>
</dbReference>
<dbReference type="PROSITE" id="PS00285">
    <property type="entry name" value="POTATO_INHIBITOR"/>
    <property type="match status" value="1"/>
</dbReference>
<name>ICIA_HORVU</name>
<protein>
    <recommendedName>
        <fullName>Subtilisin-chymotrypsin inhibitor CI-1A</fullName>
    </recommendedName>
</protein>
<proteinExistence type="evidence at protein level"/>